<comment type="function">
    <text evidence="9">Regulates both the synthesis and turnover of phosphatidylinositol 3,5-bisphosphate (1,2-diacyl-sn-glycero-3-phospho-(1D-myo-inositol-3,5-bisphosphate) or PtdIns(3,5)P2) (PubMed:16837550). Catalyzes the phosphorylation of phosphatidylinositol 3-phosphate (1,2-diacyl-sn-glycero-3-phospho-(1D-myo-inositol-3-phosphate)) on the fifth hydroxyl of the myo-inositol ring, to form PtdIns(3,5)P2 (PubMed:16837550). Required for endocytic-vacuolar pathway and nuclear migration. Has a role at a late stage in endosome-related membrane trafficking, at a point when signal termination has occurred. Is not required for receptor silencing.</text>
</comment>
<comment type="catalytic activity">
    <reaction evidence="12">
        <text>a 1,2-diacyl-sn-glycero-3-phospho-(1D-myo-inositol-3-phosphate) + ATP = a 1,2-diacyl-sn-glycero-3-phospho-(1D-myo-inositol-3,5-bisphosphate) + ADP + H(+)</text>
        <dbReference type="Rhea" id="RHEA:13609"/>
        <dbReference type="ChEBI" id="CHEBI:15378"/>
        <dbReference type="ChEBI" id="CHEBI:30616"/>
        <dbReference type="ChEBI" id="CHEBI:57923"/>
        <dbReference type="ChEBI" id="CHEBI:58088"/>
        <dbReference type="ChEBI" id="CHEBI:456216"/>
        <dbReference type="EC" id="2.7.1.150"/>
    </reaction>
    <physiologicalReaction direction="left-to-right" evidence="12">
        <dbReference type="Rhea" id="RHEA:13610"/>
    </physiologicalReaction>
</comment>
<comment type="cofactor">
    <cofactor evidence="1">
        <name>Zn(2+)</name>
        <dbReference type="ChEBI" id="CHEBI:29105"/>
    </cofactor>
</comment>
<comment type="subcellular location">
    <subcellularLocation>
        <location evidence="9">Endosome membrane</location>
    </subcellularLocation>
    <text>Mainly associated with membranes of the late endocytic pathway.</text>
</comment>
<comment type="disruption phenotype">
    <text evidence="9">Flies contain undetectable phosphatidylinositol 3,5-bisphosphate levels, show profound increases in cell and organ size, and die at the pupal stage. Mutant larvae contain highly enlarged multivesicular bodies and late endosomes that are inefficiently acidified. Even though endocytic receptor trafficking is impaired in fab1 mutants, Notch, Wingless, and Dpp signaling is unaffected.</text>
</comment>
<comment type="sequence caution" evidence="11">
    <conflict type="erroneous initiation">
        <sequence resource="EMBL-CDS" id="AAL25475"/>
    </conflict>
</comment>
<comment type="sequence caution" evidence="11">
    <conflict type="erroneous initiation">
        <sequence resource="EMBL-CDS" id="AAL39881"/>
    </conflict>
</comment>
<comment type="sequence caution" evidence="11">
    <conflict type="erroneous gene model prediction">
        <sequence resource="EMBL-CDS" id="CAA22949"/>
    </conflict>
</comment>
<organism evidence="13">
    <name type="scientific">Drosophila melanogaster</name>
    <name type="common">Fruit fly</name>
    <dbReference type="NCBI Taxonomy" id="7227"/>
    <lineage>
        <taxon>Eukaryota</taxon>
        <taxon>Metazoa</taxon>
        <taxon>Ecdysozoa</taxon>
        <taxon>Arthropoda</taxon>
        <taxon>Hexapoda</taxon>
        <taxon>Insecta</taxon>
        <taxon>Pterygota</taxon>
        <taxon>Neoptera</taxon>
        <taxon>Endopterygota</taxon>
        <taxon>Diptera</taxon>
        <taxon>Brachycera</taxon>
        <taxon>Muscomorpha</taxon>
        <taxon>Ephydroidea</taxon>
        <taxon>Drosophilidae</taxon>
        <taxon>Drosophila</taxon>
        <taxon>Sophophora</taxon>
    </lineage>
</organism>
<gene>
    <name type="primary">fab1</name>
    <name type="ORF">CG6355</name>
</gene>
<evidence type="ECO:0000250" key="1"/>
<evidence type="ECO:0000255" key="2">
    <source>
        <dbReference type="PROSITE-ProRule" id="PRU00066"/>
    </source>
</evidence>
<evidence type="ECO:0000255" key="3">
    <source>
        <dbReference type="PROSITE-ProRule" id="PRU00091"/>
    </source>
</evidence>
<evidence type="ECO:0000255" key="4">
    <source>
        <dbReference type="PROSITE-ProRule" id="PRU00781"/>
    </source>
</evidence>
<evidence type="ECO:0000256" key="5">
    <source>
        <dbReference type="SAM" id="MobiDB-lite"/>
    </source>
</evidence>
<evidence type="ECO:0000269" key="6">
    <source>
    </source>
</evidence>
<evidence type="ECO:0000269" key="7">
    <source>
    </source>
</evidence>
<evidence type="ECO:0000269" key="8">
    <source>
    </source>
</evidence>
<evidence type="ECO:0000269" key="9">
    <source>
    </source>
</evidence>
<evidence type="ECO:0000269" key="10">
    <source>
    </source>
</evidence>
<evidence type="ECO:0000305" key="11"/>
<evidence type="ECO:0000305" key="12">
    <source>
    </source>
</evidence>
<evidence type="ECO:0000312" key="13">
    <source>
        <dbReference type="EMBL" id="AAL39881.1"/>
    </source>
</evidence>
<name>FYV1_DROME</name>
<protein>
    <recommendedName>
        <fullName>Putative 1-phosphatidylinositol 3-phosphate 5-kinase</fullName>
        <shortName>Phosphatidylinositol 3-phosphate 5-kinase</shortName>
        <ecNumber evidence="12">2.7.1.150</ecNumber>
    </recommendedName>
    <alternativeName>
        <fullName>Type III PIP kinase</fullName>
        <shortName>PIPkin-III</shortName>
    </alternativeName>
</protein>
<keyword id="KW-0067">ATP-binding</keyword>
<keyword id="KW-0967">Endosome</keyword>
<keyword id="KW-0418">Kinase</keyword>
<keyword id="KW-0472">Membrane</keyword>
<keyword id="KW-0479">Metal-binding</keyword>
<keyword id="KW-0547">Nucleotide-binding</keyword>
<keyword id="KW-0597">Phosphoprotein</keyword>
<keyword id="KW-1185">Reference proteome</keyword>
<keyword id="KW-0808">Transferase</keyword>
<keyword id="KW-0862">Zinc</keyword>
<keyword id="KW-0863">Zinc-finger</keyword>
<reference evidence="11" key="1">
    <citation type="journal article" date="2000" name="Science">
        <title>The genome sequence of Drosophila melanogaster.</title>
        <authorList>
            <person name="Adams M.D."/>
            <person name="Celniker S.E."/>
            <person name="Holt R.A."/>
            <person name="Evans C.A."/>
            <person name="Gocayne J.D."/>
            <person name="Amanatides P.G."/>
            <person name="Scherer S.E."/>
            <person name="Li P.W."/>
            <person name="Hoskins R.A."/>
            <person name="Galle R.F."/>
            <person name="George R.A."/>
            <person name="Lewis S.E."/>
            <person name="Richards S."/>
            <person name="Ashburner M."/>
            <person name="Henderson S.N."/>
            <person name="Sutton G.G."/>
            <person name="Wortman J.R."/>
            <person name="Yandell M.D."/>
            <person name="Zhang Q."/>
            <person name="Chen L.X."/>
            <person name="Brandon R.C."/>
            <person name="Rogers Y.-H.C."/>
            <person name="Blazej R.G."/>
            <person name="Champe M."/>
            <person name="Pfeiffer B.D."/>
            <person name="Wan K.H."/>
            <person name="Doyle C."/>
            <person name="Baxter E.G."/>
            <person name="Helt G."/>
            <person name="Nelson C.R."/>
            <person name="Miklos G.L.G."/>
            <person name="Abril J.F."/>
            <person name="Agbayani A."/>
            <person name="An H.-J."/>
            <person name="Andrews-Pfannkoch C."/>
            <person name="Baldwin D."/>
            <person name="Ballew R.M."/>
            <person name="Basu A."/>
            <person name="Baxendale J."/>
            <person name="Bayraktaroglu L."/>
            <person name="Beasley E.M."/>
            <person name="Beeson K.Y."/>
            <person name="Benos P.V."/>
            <person name="Berman B.P."/>
            <person name="Bhandari D."/>
            <person name="Bolshakov S."/>
            <person name="Borkova D."/>
            <person name="Botchan M.R."/>
            <person name="Bouck J."/>
            <person name="Brokstein P."/>
            <person name="Brottier P."/>
            <person name="Burtis K.C."/>
            <person name="Busam D.A."/>
            <person name="Butler H."/>
            <person name="Cadieu E."/>
            <person name="Center A."/>
            <person name="Chandra I."/>
            <person name="Cherry J.M."/>
            <person name="Cawley S."/>
            <person name="Dahlke C."/>
            <person name="Davenport L.B."/>
            <person name="Davies P."/>
            <person name="de Pablos B."/>
            <person name="Delcher A."/>
            <person name="Deng Z."/>
            <person name="Mays A.D."/>
            <person name="Dew I."/>
            <person name="Dietz S.M."/>
            <person name="Dodson K."/>
            <person name="Doup L.E."/>
            <person name="Downes M."/>
            <person name="Dugan-Rocha S."/>
            <person name="Dunkov B.C."/>
            <person name="Dunn P."/>
            <person name="Durbin K.J."/>
            <person name="Evangelista C.C."/>
            <person name="Ferraz C."/>
            <person name="Ferriera S."/>
            <person name="Fleischmann W."/>
            <person name="Fosler C."/>
            <person name="Gabrielian A.E."/>
            <person name="Garg N.S."/>
            <person name="Gelbart W.M."/>
            <person name="Glasser K."/>
            <person name="Glodek A."/>
            <person name="Gong F."/>
            <person name="Gorrell J.H."/>
            <person name="Gu Z."/>
            <person name="Guan P."/>
            <person name="Harris M."/>
            <person name="Harris N.L."/>
            <person name="Harvey D.A."/>
            <person name="Heiman T.J."/>
            <person name="Hernandez J.R."/>
            <person name="Houck J."/>
            <person name="Hostin D."/>
            <person name="Houston K.A."/>
            <person name="Howland T.J."/>
            <person name="Wei M.-H."/>
            <person name="Ibegwam C."/>
            <person name="Jalali M."/>
            <person name="Kalush F."/>
            <person name="Karpen G.H."/>
            <person name="Ke Z."/>
            <person name="Kennison J.A."/>
            <person name="Ketchum K.A."/>
            <person name="Kimmel B.E."/>
            <person name="Kodira C.D."/>
            <person name="Kraft C.L."/>
            <person name="Kravitz S."/>
            <person name="Kulp D."/>
            <person name="Lai Z."/>
            <person name="Lasko P."/>
            <person name="Lei Y."/>
            <person name="Levitsky A.A."/>
            <person name="Li J.H."/>
            <person name="Li Z."/>
            <person name="Liang Y."/>
            <person name="Lin X."/>
            <person name="Liu X."/>
            <person name="Mattei B."/>
            <person name="McIntosh T.C."/>
            <person name="McLeod M.P."/>
            <person name="McPherson D."/>
            <person name="Merkulov G."/>
            <person name="Milshina N.V."/>
            <person name="Mobarry C."/>
            <person name="Morris J."/>
            <person name="Moshrefi A."/>
            <person name="Mount S.M."/>
            <person name="Moy M."/>
            <person name="Murphy B."/>
            <person name="Murphy L."/>
            <person name="Muzny D.M."/>
            <person name="Nelson D.L."/>
            <person name="Nelson D.R."/>
            <person name="Nelson K.A."/>
            <person name="Nixon K."/>
            <person name="Nusskern D.R."/>
            <person name="Pacleb J.M."/>
            <person name="Palazzolo M."/>
            <person name="Pittman G.S."/>
            <person name="Pan S."/>
            <person name="Pollard J."/>
            <person name="Puri V."/>
            <person name="Reese M.G."/>
            <person name="Reinert K."/>
            <person name="Remington K."/>
            <person name="Saunders R.D.C."/>
            <person name="Scheeler F."/>
            <person name="Shen H."/>
            <person name="Shue B.C."/>
            <person name="Siden-Kiamos I."/>
            <person name="Simpson M."/>
            <person name="Skupski M.P."/>
            <person name="Smith T.J."/>
            <person name="Spier E."/>
            <person name="Spradling A.C."/>
            <person name="Stapleton M."/>
            <person name="Strong R."/>
            <person name="Sun E."/>
            <person name="Svirskas R."/>
            <person name="Tector C."/>
            <person name="Turner R."/>
            <person name="Venter E."/>
            <person name="Wang A.H."/>
            <person name="Wang X."/>
            <person name="Wang Z.-Y."/>
            <person name="Wassarman D.A."/>
            <person name="Weinstock G.M."/>
            <person name="Weissenbach J."/>
            <person name="Williams S.M."/>
            <person name="Woodage T."/>
            <person name="Worley K.C."/>
            <person name="Wu D."/>
            <person name="Yang S."/>
            <person name="Yao Q.A."/>
            <person name="Ye J."/>
            <person name="Yeh R.-F."/>
            <person name="Zaveri J.S."/>
            <person name="Zhan M."/>
            <person name="Zhang G."/>
            <person name="Zhao Q."/>
            <person name="Zheng L."/>
            <person name="Zheng X.H."/>
            <person name="Zhong F.N."/>
            <person name="Zhong W."/>
            <person name="Zhou X."/>
            <person name="Zhu S.C."/>
            <person name="Zhu X."/>
            <person name="Smith H.O."/>
            <person name="Gibbs R.A."/>
            <person name="Myers E.W."/>
            <person name="Rubin G.M."/>
            <person name="Venter J.C."/>
        </authorList>
    </citation>
    <scope>NUCLEOTIDE SEQUENCE [LARGE SCALE GENOMIC DNA]</scope>
    <source>
        <strain evidence="6">Berkeley</strain>
    </source>
</reference>
<reference key="2">
    <citation type="journal article" date="2002" name="Genome Biol.">
        <title>Annotation of the Drosophila melanogaster euchromatic genome: a systematic review.</title>
        <authorList>
            <person name="Misra S."/>
            <person name="Crosby M.A."/>
            <person name="Mungall C.J."/>
            <person name="Matthews B.B."/>
            <person name="Campbell K.S."/>
            <person name="Hradecky P."/>
            <person name="Huang Y."/>
            <person name="Kaminker J.S."/>
            <person name="Millburn G.H."/>
            <person name="Prochnik S.E."/>
            <person name="Smith C.D."/>
            <person name="Tupy J.L."/>
            <person name="Whitfield E.J."/>
            <person name="Bayraktaroglu L."/>
            <person name="Berman B.P."/>
            <person name="Bettencourt B.R."/>
            <person name="Celniker S.E."/>
            <person name="de Grey A.D.N.J."/>
            <person name="Drysdale R.A."/>
            <person name="Harris N.L."/>
            <person name="Richter J."/>
            <person name="Russo S."/>
            <person name="Schroeder A.J."/>
            <person name="Shu S.Q."/>
            <person name="Stapleton M."/>
            <person name="Yamada C."/>
            <person name="Ashburner M."/>
            <person name="Gelbart W.M."/>
            <person name="Rubin G.M."/>
            <person name="Lewis S.E."/>
        </authorList>
    </citation>
    <scope>GENOME REANNOTATION</scope>
    <source>
        <strain>Berkeley</strain>
    </source>
</reference>
<reference evidence="11" key="3">
    <citation type="journal article" date="2000" name="Science">
        <title>From sequence to chromosome: the tip of the X chromosome of D. melanogaster.</title>
        <authorList>
            <person name="Benos P.V."/>
            <person name="Gatt M.K."/>
            <person name="Ashburner M."/>
            <person name="Murphy L."/>
            <person name="Harris D."/>
            <person name="Barrell B.G."/>
            <person name="Ferraz C."/>
            <person name="Vidal S."/>
            <person name="Brun C."/>
            <person name="Demailles J."/>
            <person name="Cadieu E."/>
            <person name="Dreano S."/>
            <person name="Gloux S."/>
            <person name="Lelaure V."/>
            <person name="Mottier S."/>
            <person name="Galibert F."/>
            <person name="Borkova D."/>
            <person name="Minana B."/>
            <person name="Kafatos F.C."/>
            <person name="Louis C."/>
            <person name="Siden-Kiamos I."/>
            <person name="Bolshakov S."/>
            <person name="Papagiannakis G."/>
            <person name="Spanos L."/>
            <person name="Cox S."/>
            <person name="Madueno E."/>
            <person name="de Pablos B."/>
            <person name="Modolell J."/>
            <person name="Peter A."/>
            <person name="Schoettler P."/>
            <person name="Werner M."/>
            <person name="Mourkioti F."/>
            <person name="Beinert N."/>
            <person name="Dowe G."/>
            <person name="Schaefer U."/>
            <person name="Jaeckle H."/>
            <person name="Bucheton A."/>
            <person name="Callister D.M."/>
            <person name="Campbell L.A."/>
            <person name="Darlamitsou A."/>
            <person name="Henderson N.S."/>
            <person name="McMillan P.J."/>
            <person name="Salles C."/>
            <person name="Tait E.A."/>
            <person name="Valenti P."/>
            <person name="Saunders R.D.C."/>
            <person name="Glover D.M."/>
        </authorList>
    </citation>
    <scope>NUCLEOTIDE SEQUENCE [LARGE SCALE GENOMIC DNA]</scope>
    <source>
        <strain evidence="7">Oregon-R</strain>
    </source>
</reference>
<reference evidence="11" key="4">
    <citation type="journal article" date="2002" name="Genome Biol.">
        <title>A Drosophila full-length cDNA resource.</title>
        <authorList>
            <person name="Stapleton M."/>
            <person name="Carlson J.W."/>
            <person name="Brokstein P."/>
            <person name="Yu C."/>
            <person name="Champe M."/>
            <person name="George R.A."/>
            <person name="Guarin H."/>
            <person name="Kronmiller B."/>
            <person name="Pacleb J.M."/>
            <person name="Park S."/>
            <person name="Wan K.H."/>
            <person name="Rubin G.M."/>
            <person name="Celniker S.E."/>
        </authorList>
    </citation>
    <scope>NUCLEOTIDE SEQUENCE [LARGE SCALE MRNA] OF 979-1809</scope>
    <source>
        <strain evidence="8">Berkeley</strain>
        <tissue evidence="8">Embryo</tissue>
        <tissue evidence="8">Larva</tissue>
        <tissue evidence="8">Pupae</tissue>
    </source>
</reference>
<reference key="5">
    <citation type="journal article" date="2006" name="Mol. Biol. Cell">
        <title>Fab1 phosphatidylinositol 3-phosphate 5-kinase controls trafficking but not silencing of endocytosed receptors.</title>
        <authorList>
            <person name="Rusten T.E."/>
            <person name="Rodahl L.M.W."/>
            <person name="Pattni K."/>
            <person name="Englund C."/>
            <person name="Samakovlis C."/>
            <person name="Dove S."/>
            <person name="Brech A."/>
            <person name="Stenmark H."/>
        </authorList>
    </citation>
    <scope>FUNCTION</scope>
    <scope>CATALYTIC ACTIVITY</scope>
    <scope>SUBCELLULAR LOCATION</scope>
    <scope>DISRUPTION PHENOTYPE</scope>
</reference>
<reference key="6">
    <citation type="journal article" date="2008" name="J. Proteome Res.">
        <title>Phosphoproteome analysis of Drosophila melanogaster embryos.</title>
        <authorList>
            <person name="Zhai B."/>
            <person name="Villen J."/>
            <person name="Beausoleil S.A."/>
            <person name="Mintseris J."/>
            <person name="Gygi S.P."/>
        </authorList>
    </citation>
    <scope>PHOSPHORYLATION [LARGE SCALE ANALYSIS] AT SER-755; THR-760 AND SER-1530</scope>
    <scope>IDENTIFICATION BY MASS SPECTROMETRY</scope>
    <source>
        <tissue>Embryo</tissue>
    </source>
</reference>
<sequence length="1809" mass="204635">MTSNNQNNSSSHQHLHSPSKLTEFARNFEDKPESLFGRVVNKIQNVYNQSYNTVNDISSGSSSSSSTQPVQVVGKSQFFSDSQTSTAEIADVETSSQSSVRPQPPTTLSIRTNSETRGTSTSSNTAAEDSETSDRVETLPLPTSEANQGRTVSNVLKHISNIVATKNNNDLRNYKDTELQRFWMPDSKAKECYDCSQKFSTFRRKHHCRLCGQIFCSKCCNQVVPGMIIRCDGDLKVCNYCSKIVLTFLKSSSSEMGQDMQELQQHLSNKLEVQDSGSSLAKHPQMQRAPLPRKTSVGYQEERFSSHPTYTTLSIDDRKNILQQSNSLITLHEEMQRDLPAQNCGQRLIEFLNSNNKSANEVQAVAILNAMLAAGFLEPIVPDPEQMDFDSSLHYKFSKSSSSDTSRTMSPQFEANPHAEPQPPKSMDQSAEEKEKELENELENDRCYTTATSKLLASYCEHEEQLLAQMLRAHNLDQEWDKVLQMLCSTAANHFKPEHCSNDLMDIRNYVNFKKVPGGRRKDSKIVHGVAFSKNVAHKDMATHVPFPRILLLQCPIVYERIEGKFVTIETVLLQEKEYLRNVCARIMSFKPNVVLVHKNVAGIAQDLLRSYEVTLVLDVKLSVMERLSRTLQCDIVSSIESNITMPKLGYCNDFYIRNYNGKTLMFFEKLTNPRGYTCLLRGGSNAELTRVKRVASALLFARYNWRLEMSFLLNEFAQPLSPKPSIFDSKETSPKTETEAELRSKRPIILERKSEDKITTIVSENVSDFTDPLRASQAEALSTSPCAPPVVEALAVEPRYDNRFRTALSSTLLSVSPFLTFPLPYLETEQGRKCKLRKLFPAELYFSKQWSRTGLERPDSMGDGEAGKSEPGNKENQMQLLPAHDFVLMKITAPASSRDIQSKLAEFRSFGGRLPKGKAPMLRPKKKNAEVIQRPQKVSEEQLYKDALDPQNHQRLPVLFCSFHYNPKGVSSFCKLPMLLDMKFYGQYDIMLEQFLQRYCCLFNSMCPSCNLPMLGHVRRYVHSLGCVHVYLTEDLTRSDPTRIYFTSWCSICNATTPTIPLSDAAKCLSLAKYLEMRFHGHAYKRRPPSTDAEQGGTVCEHSLHRDYVHHFSFRGVGAKFQYTPVEVWETDLPSLTVQLDLPQPFQSAQVQEEIKNFSIKGHEVYNRIHERIADLATEEENSPLVQHLKTMLTHDQFIFKQKIEIVHTLLTDNRATAYDTSDALAMARRALAESIELWGPRLQEIEKLTAKQAHHIDSGTICTEELRPEQVQTADSSKVTTSSLPKENDPLECPSEDTETGASNSQTVLDKNFSIDQMLASTVNVYSDKKSIRKILTQLLPSGNQVNPLQSPFPAQDHLTLPLGSIPIHVRETDLSSVIAYSLTSMDYQKAIDEAEANSNAAHSSPQLKRKIPLAESVSDAEDSPSLSRTSSNTSAAPNASVPSPATAASESEEKSKERIKQPPSPHITLAFQDHSCQFQCKIYFAREFDAMRSKSLKPPKLDKSLYRRLEKSKMREELRISQSRTGSEMELVRKPSDVGAPRTTEDDSNQEEDARIALARSLCKSVQWEARGGKSGSRFCKTLDDRFVLKEMNSRDMTIFEPFAPKYFEYIDRCQQQQQPTLLAKIFGVFRVSVKKKDSFVERSVMVMENLFYGCNIENKFDLKGSERNRLVDPSNQQGEIVLLDENLVQMSWSKPLYVLSHSKTVLRDAIQRDSSFLEKNLVMDYSLLVGLDKKNGVLVLGIIDYIRTFTLDKRVESIIKGSGILGGKGKDPTVVNPERYKQRFIDAMDRYFLTVPDRWEGLSKV</sequence>
<proteinExistence type="evidence at protein level"/>
<dbReference type="EC" id="2.7.1.150" evidence="12"/>
<dbReference type="EMBL" id="AE013599">
    <property type="protein sequence ID" value="AAF57789.1"/>
    <property type="molecule type" value="Genomic_DNA"/>
</dbReference>
<dbReference type="EMBL" id="AE013599">
    <property type="protein sequence ID" value="AAS64818.1"/>
    <property type="molecule type" value="Genomic_DNA"/>
</dbReference>
<dbReference type="EMBL" id="AL035311">
    <property type="protein sequence ID" value="CAA22949.1"/>
    <property type="status" value="ALT_SEQ"/>
    <property type="molecule type" value="Genomic_DNA"/>
</dbReference>
<dbReference type="EMBL" id="AY060436">
    <property type="protein sequence ID" value="AAL25475.1"/>
    <property type="status" value="ALT_INIT"/>
    <property type="molecule type" value="mRNA"/>
</dbReference>
<dbReference type="EMBL" id="AY069736">
    <property type="protein sequence ID" value="AAL39881.1"/>
    <property type="status" value="ALT_INIT"/>
    <property type="molecule type" value="mRNA"/>
</dbReference>
<dbReference type="PIR" id="T13576">
    <property type="entry name" value="T13576"/>
</dbReference>
<dbReference type="RefSeq" id="NP_611269.1">
    <property type="nucleotide sequence ID" value="NM_137425.4"/>
</dbReference>
<dbReference type="RefSeq" id="NP_995880.1">
    <property type="nucleotide sequence ID" value="NM_206158.3"/>
</dbReference>
<dbReference type="SMR" id="O96838"/>
<dbReference type="BioGRID" id="62718">
    <property type="interactions" value="3"/>
</dbReference>
<dbReference type="FunCoup" id="O96838">
    <property type="interactions" value="2099"/>
</dbReference>
<dbReference type="IntAct" id="O96838">
    <property type="interactions" value="2"/>
</dbReference>
<dbReference type="STRING" id="7227.FBpp0088523"/>
<dbReference type="iPTMnet" id="O96838"/>
<dbReference type="PaxDb" id="7227-FBpp0088523"/>
<dbReference type="EnsemblMetazoa" id="FBtr0089554">
    <property type="protein sequence ID" value="FBpp0088523"/>
    <property type="gene ID" value="FBgn0028741"/>
</dbReference>
<dbReference type="EnsemblMetazoa" id="FBtr0089555">
    <property type="protein sequence ID" value="FBpp0088952"/>
    <property type="gene ID" value="FBgn0028741"/>
</dbReference>
<dbReference type="GeneID" id="37033"/>
<dbReference type="KEGG" id="dme:Dmel_CG6355"/>
<dbReference type="AGR" id="FB:FBgn0028741"/>
<dbReference type="CTD" id="37033"/>
<dbReference type="FlyBase" id="FBgn0028741">
    <property type="gene designation" value="fab1"/>
</dbReference>
<dbReference type="VEuPathDB" id="VectorBase:FBgn0028741"/>
<dbReference type="eggNOG" id="KOG0230">
    <property type="taxonomic scope" value="Eukaryota"/>
</dbReference>
<dbReference type="GeneTree" id="ENSGT00940000156307"/>
<dbReference type="HOGENOM" id="CLU_000480_2_1_1"/>
<dbReference type="InParanoid" id="O96838"/>
<dbReference type="OMA" id="QSVWNDT"/>
<dbReference type="OrthoDB" id="158357at2759"/>
<dbReference type="PhylomeDB" id="O96838"/>
<dbReference type="SignaLink" id="O96838"/>
<dbReference type="BioGRID-ORCS" id="37033">
    <property type="hits" value="0 hits in 3 CRISPR screens"/>
</dbReference>
<dbReference type="GenomeRNAi" id="37033"/>
<dbReference type="PRO" id="PR:O96838"/>
<dbReference type="Proteomes" id="UP000000803">
    <property type="component" value="Chromosome 2R"/>
</dbReference>
<dbReference type="Bgee" id="FBgn0028741">
    <property type="expression patterns" value="Expressed in saliva-secreting gland and 10 other cell types or tissues"/>
</dbReference>
<dbReference type="GO" id="GO:0005768">
    <property type="term" value="C:endosome"/>
    <property type="evidence" value="ECO:0000314"/>
    <property type="project" value="FlyBase"/>
</dbReference>
<dbReference type="GO" id="GO:0010008">
    <property type="term" value="C:endosome membrane"/>
    <property type="evidence" value="ECO:0000318"/>
    <property type="project" value="GO_Central"/>
</dbReference>
<dbReference type="GO" id="GO:0070772">
    <property type="term" value="C:PAS complex"/>
    <property type="evidence" value="ECO:0000250"/>
    <property type="project" value="FlyBase"/>
</dbReference>
<dbReference type="GO" id="GO:0012506">
    <property type="term" value="C:vesicle membrane"/>
    <property type="evidence" value="ECO:0000250"/>
    <property type="project" value="UniProtKB"/>
</dbReference>
<dbReference type="GO" id="GO:0000285">
    <property type="term" value="F:1-phosphatidylinositol-3-phosphate 5-kinase activity"/>
    <property type="evidence" value="ECO:0000314"/>
    <property type="project" value="FlyBase"/>
</dbReference>
<dbReference type="GO" id="GO:0052810">
    <property type="term" value="F:1-phosphatidylinositol-5-kinase activity"/>
    <property type="evidence" value="ECO:0000314"/>
    <property type="project" value="FlyBase"/>
</dbReference>
<dbReference type="GO" id="GO:0005524">
    <property type="term" value="F:ATP binding"/>
    <property type="evidence" value="ECO:0007669"/>
    <property type="project" value="UniProtKB-KW"/>
</dbReference>
<dbReference type="GO" id="GO:0008270">
    <property type="term" value="F:zinc ion binding"/>
    <property type="evidence" value="ECO:0000250"/>
    <property type="project" value="UniProtKB"/>
</dbReference>
<dbReference type="GO" id="GO:0097352">
    <property type="term" value="P:autophagosome maturation"/>
    <property type="evidence" value="ECO:0000315"/>
    <property type="project" value="FlyBase"/>
</dbReference>
<dbReference type="GO" id="GO:0008333">
    <property type="term" value="P:endosome to lysosome transport"/>
    <property type="evidence" value="ECO:0000315"/>
    <property type="project" value="FlyBase"/>
</dbReference>
<dbReference type="GO" id="GO:0035556">
    <property type="term" value="P:intracellular signal transduction"/>
    <property type="evidence" value="ECO:0000250"/>
    <property type="project" value="UniProtKB"/>
</dbReference>
<dbReference type="GO" id="GO:0046854">
    <property type="term" value="P:phosphatidylinositol phosphate biosynthetic process"/>
    <property type="evidence" value="ECO:0000315"/>
    <property type="project" value="FlyBase"/>
</dbReference>
<dbReference type="GO" id="GO:0007033">
    <property type="term" value="P:vacuole organization"/>
    <property type="evidence" value="ECO:0000318"/>
    <property type="project" value="GO_Central"/>
</dbReference>
<dbReference type="CDD" id="cd03334">
    <property type="entry name" value="Fab1_TCP"/>
    <property type="match status" value="1"/>
</dbReference>
<dbReference type="CDD" id="cd15725">
    <property type="entry name" value="FYVE_PIKfyve_Fab1"/>
    <property type="match status" value="1"/>
</dbReference>
<dbReference type="CDD" id="cd17300">
    <property type="entry name" value="PIPKc_PIKfyve"/>
    <property type="match status" value="1"/>
</dbReference>
<dbReference type="FunFam" id="3.30.810.10:FF:000001">
    <property type="entry name" value="1-phosphatidylinositol 3-phosphate 5-kinase FAB1"/>
    <property type="match status" value="1"/>
</dbReference>
<dbReference type="FunFam" id="3.30.40.10:FF:000057">
    <property type="entry name" value="1-phosphatidylinositol 3-phosphate 5-kinase isoform X1"/>
    <property type="match status" value="1"/>
</dbReference>
<dbReference type="FunFam" id="3.50.7.10:FF:000007">
    <property type="entry name" value="1-phosphatidylinositol 3-phosphate 5-kinase isoform X1"/>
    <property type="match status" value="1"/>
</dbReference>
<dbReference type="Gene3D" id="3.30.810.10">
    <property type="entry name" value="2-Layer Sandwich"/>
    <property type="match status" value="1"/>
</dbReference>
<dbReference type="Gene3D" id="3.50.7.10">
    <property type="entry name" value="GroEL"/>
    <property type="match status" value="1"/>
</dbReference>
<dbReference type="Gene3D" id="3.30.800.10">
    <property type="entry name" value="Phosphatidylinositol Phosphate Kinase II Beta"/>
    <property type="match status" value="1"/>
</dbReference>
<dbReference type="Gene3D" id="3.30.40.10">
    <property type="entry name" value="Zinc/RING finger domain, C3HC4 (zinc finger)"/>
    <property type="match status" value="1"/>
</dbReference>
<dbReference type="InterPro" id="IPR002423">
    <property type="entry name" value="Cpn60/GroEL/TCP-1"/>
</dbReference>
<dbReference type="InterPro" id="IPR000591">
    <property type="entry name" value="DEP_dom"/>
</dbReference>
<dbReference type="InterPro" id="IPR027409">
    <property type="entry name" value="GroEL-like_apical_dom_sf"/>
</dbReference>
<dbReference type="InterPro" id="IPR044769">
    <property type="entry name" value="PIKfyve_PIPKc"/>
</dbReference>
<dbReference type="InterPro" id="IPR027483">
    <property type="entry name" value="PInositol-4-P-4/5-kinase_C_sf"/>
</dbReference>
<dbReference type="InterPro" id="IPR002498">
    <property type="entry name" value="PInositol-4-P-4/5-kinase_core"/>
</dbReference>
<dbReference type="InterPro" id="IPR027484">
    <property type="entry name" value="PInositol-4-P-5-kinase_N"/>
</dbReference>
<dbReference type="InterPro" id="IPR036390">
    <property type="entry name" value="WH_DNA-bd_sf"/>
</dbReference>
<dbReference type="InterPro" id="IPR000306">
    <property type="entry name" value="Znf_FYVE"/>
</dbReference>
<dbReference type="InterPro" id="IPR017455">
    <property type="entry name" value="Znf_FYVE-rel"/>
</dbReference>
<dbReference type="InterPro" id="IPR011011">
    <property type="entry name" value="Znf_FYVE_PHD"/>
</dbReference>
<dbReference type="InterPro" id="IPR013083">
    <property type="entry name" value="Znf_RING/FYVE/PHD"/>
</dbReference>
<dbReference type="PANTHER" id="PTHR45748">
    <property type="entry name" value="1-PHOSPHATIDYLINOSITOL 3-PHOSPHATE 5-KINASE-RELATED"/>
    <property type="match status" value="1"/>
</dbReference>
<dbReference type="PANTHER" id="PTHR45748:SF7">
    <property type="entry name" value="1-PHOSPHATIDYLINOSITOL 3-PHOSPHATE 5-KINASE-RELATED"/>
    <property type="match status" value="1"/>
</dbReference>
<dbReference type="Pfam" id="PF00118">
    <property type="entry name" value="Cpn60_TCP1"/>
    <property type="match status" value="1"/>
</dbReference>
<dbReference type="Pfam" id="PF01363">
    <property type="entry name" value="FYVE"/>
    <property type="match status" value="1"/>
</dbReference>
<dbReference type="Pfam" id="PF01504">
    <property type="entry name" value="PIP5K"/>
    <property type="match status" value="1"/>
</dbReference>
<dbReference type="SMART" id="SM00049">
    <property type="entry name" value="DEP"/>
    <property type="match status" value="1"/>
</dbReference>
<dbReference type="SMART" id="SM00064">
    <property type="entry name" value="FYVE"/>
    <property type="match status" value="1"/>
</dbReference>
<dbReference type="SMART" id="SM00330">
    <property type="entry name" value="PIPKc"/>
    <property type="match status" value="1"/>
</dbReference>
<dbReference type="SUPFAM" id="SSF57903">
    <property type="entry name" value="FYVE/PHD zinc finger"/>
    <property type="match status" value="1"/>
</dbReference>
<dbReference type="SUPFAM" id="SSF52029">
    <property type="entry name" value="GroEL apical domain-like"/>
    <property type="match status" value="1"/>
</dbReference>
<dbReference type="SUPFAM" id="SSF56104">
    <property type="entry name" value="SAICAR synthase-like"/>
    <property type="match status" value="1"/>
</dbReference>
<dbReference type="SUPFAM" id="SSF46785">
    <property type="entry name" value="Winged helix' DNA-binding domain"/>
    <property type="match status" value="1"/>
</dbReference>
<dbReference type="PROSITE" id="PS50186">
    <property type="entry name" value="DEP"/>
    <property type="match status" value="1"/>
</dbReference>
<dbReference type="PROSITE" id="PS51455">
    <property type="entry name" value="PIPK"/>
    <property type="match status" value="1"/>
</dbReference>
<dbReference type="PROSITE" id="PS50178">
    <property type="entry name" value="ZF_FYVE"/>
    <property type="match status" value="1"/>
</dbReference>
<accession>O96838</accession>
<accession>A4UZM3</accession>
<accession>Q8SZX0</accession>
<accession>Q95SX9</accession>
<accession>Q9V886</accession>
<feature type="chain" id="PRO_0000185454" description="Putative 1-phosphatidylinositol 3-phosphate 5-kinase">
    <location>
        <begin position="1"/>
        <end position="1809"/>
    </location>
</feature>
<feature type="domain" description="DEP" evidence="2 11">
    <location>
        <begin position="323"/>
        <end position="399"/>
    </location>
</feature>
<feature type="domain" description="PIPK" evidence="4">
    <location>
        <begin position="1473"/>
        <end position="1796"/>
    </location>
</feature>
<feature type="zinc finger region" description="FYVE-type" evidence="3 11">
    <location>
        <begin position="186"/>
        <end position="246"/>
    </location>
</feature>
<feature type="region of interest" description="Disordered" evidence="5">
    <location>
        <begin position="1"/>
        <end position="20"/>
    </location>
</feature>
<feature type="region of interest" description="Disordered" evidence="5">
    <location>
        <begin position="84"/>
        <end position="146"/>
    </location>
</feature>
<feature type="region of interest" description="Disordered" evidence="5">
    <location>
        <begin position="274"/>
        <end position="300"/>
    </location>
</feature>
<feature type="region of interest" description="Disordered" evidence="5">
    <location>
        <begin position="399"/>
        <end position="444"/>
    </location>
</feature>
<feature type="region of interest" description="Disordered" evidence="5">
    <location>
        <begin position="856"/>
        <end position="876"/>
    </location>
</feature>
<feature type="region of interest" description="Disordered" evidence="5">
    <location>
        <begin position="1269"/>
        <end position="1307"/>
    </location>
</feature>
<feature type="region of interest" description="Disordered" evidence="5">
    <location>
        <begin position="1399"/>
        <end position="1465"/>
    </location>
</feature>
<feature type="region of interest" description="Disordered" evidence="5">
    <location>
        <begin position="1521"/>
        <end position="1554"/>
    </location>
</feature>
<feature type="region of interest" description="Catalytic">
    <location>
        <begin position="1552"/>
        <end position="1809"/>
    </location>
</feature>
<feature type="compositionally biased region" description="Low complexity" evidence="5">
    <location>
        <begin position="1"/>
        <end position="12"/>
    </location>
</feature>
<feature type="compositionally biased region" description="Polar residues" evidence="5">
    <location>
        <begin position="84"/>
        <end position="127"/>
    </location>
</feature>
<feature type="compositionally biased region" description="Low complexity" evidence="5">
    <location>
        <begin position="399"/>
        <end position="410"/>
    </location>
</feature>
<feature type="compositionally biased region" description="Basic and acidic residues" evidence="5">
    <location>
        <begin position="431"/>
        <end position="444"/>
    </location>
</feature>
<feature type="compositionally biased region" description="Basic and acidic residues" evidence="5">
    <location>
        <begin position="856"/>
        <end position="874"/>
    </location>
</feature>
<feature type="compositionally biased region" description="Polar residues" evidence="5">
    <location>
        <begin position="1272"/>
        <end position="1287"/>
    </location>
</feature>
<feature type="compositionally biased region" description="Low complexity" evidence="5">
    <location>
        <begin position="1426"/>
        <end position="1452"/>
    </location>
</feature>
<feature type="compositionally biased region" description="Basic and acidic residues" evidence="5">
    <location>
        <begin position="1454"/>
        <end position="1463"/>
    </location>
</feature>
<feature type="binding site" evidence="3">
    <location>
        <position position="192"/>
    </location>
    <ligand>
        <name>Zn(2+)</name>
        <dbReference type="ChEBI" id="CHEBI:29105"/>
        <label>1</label>
    </ligand>
</feature>
<feature type="binding site" evidence="3">
    <location>
        <position position="195"/>
    </location>
    <ligand>
        <name>Zn(2+)</name>
        <dbReference type="ChEBI" id="CHEBI:29105"/>
        <label>1</label>
    </ligand>
</feature>
<feature type="binding site" evidence="3">
    <location>
        <position position="208"/>
    </location>
    <ligand>
        <name>Zn(2+)</name>
        <dbReference type="ChEBI" id="CHEBI:29105"/>
        <label>2</label>
    </ligand>
</feature>
<feature type="binding site" evidence="3">
    <location>
        <position position="211"/>
    </location>
    <ligand>
        <name>Zn(2+)</name>
        <dbReference type="ChEBI" id="CHEBI:29105"/>
        <label>2</label>
    </ligand>
</feature>
<feature type="binding site" evidence="3">
    <location>
        <position position="216"/>
    </location>
    <ligand>
        <name>Zn(2+)</name>
        <dbReference type="ChEBI" id="CHEBI:29105"/>
        <label>1</label>
    </ligand>
</feature>
<feature type="binding site" evidence="3">
    <location>
        <position position="219"/>
    </location>
    <ligand>
        <name>Zn(2+)</name>
        <dbReference type="ChEBI" id="CHEBI:29105"/>
        <label>1</label>
    </ligand>
</feature>
<feature type="binding site" evidence="3">
    <location>
        <position position="238"/>
    </location>
    <ligand>
        <name>Zn(2+)</name>
        <dbReference type="ChEBI" id="CHEBI:29105"/>
        <label>2</label>
    </ligand>
</feature>
<feature type="binding site" evidence="3">
    <location>
        <position position="241"/>
    </location>
    <ligand>
        <name>Zn(2+)</name>
        <dbReference type="ChEBI" id="CHEBI:29105"/>
        <label>2</label>
    </ligand>
</feature>
<feature type="modified residue" description="Phosphoserine" evidence="10">
    <location>
        <position position="755"/>
    </location>
</feature>
<feature type="modified residue" description="Phosphothreonine" evidence="10">
    <location>
        <position position="760"/>
    </location>
</feature>
<feature type="modified residue" description="Phosphoserine" evidence="10">
    <location>
        <position position="1530"/>
    </location>
</feature>
<feature type="sequence conflict" description="In Ref. 3; CAA22949." evidence="11" ref="3">
    <original>A</original>
    <variation>ASSASA</variation>
    <location>
        <position position="1403"/>
    </location>
</feature>
<feature type="sequence conflict" description="In Ref. 3; CAA22949." evidence="11" ref="3">
    <original>V</original>
    <variation>I</variation>
    <location>
        <position position="1420"/>
    </location>
</feature>